<evidence type="ECO:0000255" key="1"/>
<evidence type="ECO:0000303" key="2">
    <source>
    </source>
</evidence>
<evidence type="ECO:0000305" key="3"/>
<evidence type="ECO:0000305" key="4">
    <source>
    </source>
</evidence>
<comment type="subcellular location">
    <subcellularLocation>
        <location evidence="4">Secreted</location>
    </subcellularLocation>
</comment>
<comment type="tissue specificity">
    <text evidence="4">Expressed by the venom gland.</text>
</comment>
<comment type="PTM">
    <text evidence="3">Contains 5 disulfide bonds.</text>
</comment>
<comment type="similarity">
    <text evidence="3">Belongs to the scoloptoxin-17 family.</text>
</comment>
<comment type="caution">
    <text evidence="4">All E.rubripes family members described in 'Undeheim et al., 2014' have not been imported into UniProtKB. Please, refer to this paper to access them.</text>
</comment>
<comment type="online information" name="National Center for Biotechnology Information (NCBI)">
    <link uri="https://www.ncbi.nlm.nih.gov/nuccore/GASI01000161"/>
</comment>
<dbReference type="GO" id="GO:0005576">
    <property type="term" value="C:extracellular region"/>
    <property type="evidence" value="ECO:0007669"/>
    <property type="project" value="UniProtKB-SubCell"/>
</dbReference>
<dbReference type="GO" id="GO:0090729">
    <property type="term" value="F:toxin activity"/>
    <property type="evidence" value="ECO:0007669"/>
    <property type="project" value="UniProtKB-KW"/>
</dbReference>
<accession>P0DQE5</accession>
<protein>
    <recommendedName>
        <fullName evidence="2">U-scoloptoxin(17)-Er2a</fullName>
        <shortName evidence="2">U-SLPTX(17)-Er2a</shortName>
    </recommendedName>
</protein>
<reference key="1">
    <citation type="journal article" date="2014" name="Mol. Biol. Evol.">
        <title>Clawing through evolution: toxin diversification and convergence in the ancient lineage Chilopoda (centipedes).</title>
        <authorList>
            <person name="Undheim E.A."/>
            <person name="Jones A."/>
            <person name="Clauser K.R."/>
            <person name="Holland J.W."/>
            <person name="Pineda S.S."/>
            <person name="King G.F."/>
            <person name="Fry B.G."/>
        </authorList>
    </citation>
    <scope>NUCLEOTIDE SEQUENCE [MRNA]</scope>
    <scope>NOMENCLATURE</scope>
    <source>
        <tissue>Venom gland</tissue>
    </source>
</reference>
<keyword id="KW-1015">Disulfide bond</keyword>
<keyword id="KW-0964">Secreted</keyword>
<keyword id="KW-0732">Signal</keyword>
<keyword id="KW-0800">Toxin</keyword>
<proteinExistence type="evidence at transcript level"/>
<feature type="signal peptide" evidence="1">
    <location>
        <begin position="1"/>
        <end position="22"/>
    </location>
</feature>
<feature type="chain" id="PRO_0000446822" description="U-scoloptoxin(17)-Er2a" evidence="3">
    <location>
        <begin position="23"/>
        <end position="151"/>
    </location>
</feature>
<name>TXH2A_ETHRU</name>
<organism>
    <name type="scientific">Ethmostigmus rubripes</name>
    <name type="common">Giant centipede</name>
    <dbReference type="NCBI Taxonomy" id="62613"/>
    <lineage>
        <taxon>Eukaryota</taxon>
        <taxon>Metazoa</taxon>
        <taxon>Ecdysozoa</taxon>
        <taxon>Arthropoda</taxon>
        <taxon>Myriapoda</taxon>
        <taxon>Chilopoda</taxon>
        <taxon>Pleurostigmophora</taxon>
        <taxon>Scolopendromorpha</taxon>
        <taxon>Scolopendridae</taxon>
        <taxon>Ethmostigmus</taxon>
    </lineage>
</organism>
<sequence length="151" mass="17196">MKSFFVVFAIVFQATLVALSLAADADDGQCINTTAVVEYFNPFIQECCPNEEPPSRDCVTCGLKGAGLVVTEDGKEMFDFDKYRRKLRGRIIRNERLIYRSLRECCRRRLCEAEPTFTCFHDKVKEQCPGDRTTSLLRSPLKDLPLRSPSC</sequence>